<gene>
    <name evidence="1" type="primary">plsY</name>
    <name type="ordered locus">YPK_0638</name>
</gene>
<dbReference type="EC" id="2.3.1.275" evidence="1"/>
<dbReference type="EMBL" id="CP000950">
    <property type="protein sequence ID" value="ACA66941.1"/>
    <property type="molecule type" value="Genomic_DNA"/>
</dbReference>
<dbReference type="RefSeq" id="WP_002217581.1">
    <property type="nucleotide sequence ID" value="NZ_CP009792.1"/>
</dbReference>
<dbReference type="SMR" id="B1JM19"/>
<dbReference type="GeneID" id="57973977"/>
<dbReference type="KEGG" id="ypy:YPK_0638"/>
<dbReference type="PATRIC" id="fig|502800.11.peg.1255"/>
<dbReference type="UniPathway" id="UPA00085"/>
<dbReference type="GO" id="GO:0005886">
    <property type="term" value="C:plasma membrane"/>
    <property type="evidence" value="ECO:0007669"/>
    <property type="project" value="UniProtKB-SubCell"/>
</dbReference>
<dbReference type="GO" id="GO:0043772">
    <property type="term" value="F:acyl-phosphate glycerol-3-phosphate acyltransferase activity"/>
    <property type="evidence" value="ECO:0007669"/>
    <property type="project" value="UniProtKB-UniRule"/>
</dbReference>
<dbReference type="GO" id="GO:0008654">
    <property type="term" value="P:phospholipid biosynthetic process"/>
    <property type="evidence" value="ECO:0007669"/>
    <property type="project" value="UniProtKB-UniRule"/>
</dbReference>
<dbReference type="HAMAP" id="MF_01043">
    <property type="entry name" value="PlsY"/>
    <property type="match status" value="1"/>
</dbReference>
<dbReference type="InterPro" id="IPR003811">
    <property type="entry name" value="G3P_acylTferase_PlsY"/>
</dbReference>
<dbReference type="NCBIfam" id="TIGR00023">
    <property type="entry name" value="glycerol-3-phosphate 1-O-acyltransferase PlsY"/>
    <property type="match status" value="1"/>
</dbReference>
<dbReference type="PANTHER" id="PTHR30309:SF0">
    <property type="entry name" value="GLYCEROL-3-PHOSPHATE ACYLTRANSFERASE-RELATED"/>
    <property type="match status" value="1"/>
</dbReference>
<dbReference type="PANTHER" id="PTHR30309">
    <property type="entry name" value="INNER MEMBRANE PROTEIN YGIH"/>
    <property type="match status" value="1"/>
</dbReference>
<dbReference type="Pfam" id="PF02660">
    <property type="entry name" value="G3P_acyltransf"/>
    <property type="match status" value="1"/>
</dbReference>
<dbReference type="SMART" id="SM01207">
    <property type="entry name" value="G3P_acyltransf"/>
    <property type="match status" value="1"/>
</dbReference>
<keyword id="KW-0997">Cell inner membrane</keyword>
<keyword id="KW-1003">Cell membrane</keyword>
<keyword id="KW-0444">Lipid biosynthesis</keyword>
<keyword id="KW-0443">Lipid metabolism</keyword>
<keyword id="KW-0472">Membrane</keyword>
<keyword id="KW-0594">Phospholipid biosynthesis</keyword>
<keyword id="KW-1208">Phospholipid metabolism</keyword>
<keyword id="KW-0808">Transferase</keyword>
<keyword id="KW-0812">Transmembrane</keyword>
<keyword id="KW-1133">Transmembrane helix</keyword>
<evidence type="ECO:0000255" key="1">
    <source>
        <dbReference type="HAMAP-Rule" id="MF_01043"/>
    </source>
</evidence>
<comment type="function">
    <text evidence="1">Catalyzes the transfer of an acyl group from acyl-phosphate (acyl-PO(4)) to glycerol-3-phosphate (G3P) to form lysophosphatidic acid (LPA). This enzyme utilizes acyl-phosphate as fatty acyl donor, but not acyl-CoA or acyl-ACP.</text>
</comment>
<comment type="catalytic activity">
    <reaction evidence="1">
        <text>an acyl phosphate + sn-glycerol 3-phosphate = a 1-acyl-sn-glycero-3-phosphate + phosphate</text>
        <dbReference type="Rhea" id="RHEA:34075"/>
        <dbReference type="ChEBI" id="CHEBI:43474"/>
        <dbReference type="ChEBI" id="CHEBI:57597"/>
        <dbReference type="ChEBI" id="CHEBI:57970"/>
        <dbReference type="ChEBI" id="CHEBI:59918"/>
        <dbReference type="EC" id="2.3.1.275"/>
    </reaction>
</comment>
<comment type="pathway">
    <text evidence="1">Lipid metabolism; phospholipid metabolism.</text>
</comment>
<comment type="subunit">
    <text evidence="1">Probably interacts with PlsX.</text>
</comment>
<comment type="subcellular location">
    <subcellularLocation>
        <location evidence="1">Cell inner membrane</location>
        <topology evidence="1">Multi-pass membrane protein</topology>
    </subcellularLocation>
</comment>
<comment type="similarity">
    <text evidence="1">Belongs to the PlsY family.</text>
</comment>
<sequence>MSAIALGMIIFAYLCGSISSAILVCRVARLPDPRTHGSGNPGATNVLRIGGRTAAVAVLLFDILKGMLPVWIAYLLHIPPLYLGLTAIAACLGHIYPVFFHFKGGKGVATAFGAIAPIGWDLTGLMTGTWLLTVLLSGYSSLGAIVSALIAPFYVWWFKPQFTFPVAMLSCLILMRHHDNIQRLWRGKEGKIWDKLRKKKQKTPAEEAAELEEKED</sequence>
<protein>
    <recommendedName>
        <fullName evidence="1">Glycerol-3-phosphate acyltransferase</fullName>
    </recommendedName>
    <alternativeName>
        <fullName evidence="1">Acyl-PO4 G3P acyltransferase</fullName>
    </alternativeName>
    <alternativeName>
        <fullName evidence="1">Acyl-phosphate--glycerol-3-phosphate acyltransferase</fullName>
    </alternativeName>
    <alternativeName>
        <fullName evidence="1">G3P acyltransferase</fullName>
        <shortName evidence="1">GPAT</shortName>
        <ecNumber evidence="1">2.3.1.275</ecNumber>
    </alternativeName>
    <alternativeName>
        <fullName evidence="1">Lysophosphatidic acid synthase</fullName>
        <shortName evidence="1">LPA synthase</shortName>
    </alternativeName>
</protein>
<reference key="1">
    <citation type="submission" date="2008-02" db="EMBL/GenBank/DDBJ databases">
        <title>Complete sequence of Yersinia pseudotuberculosis YPIII.</title>
        <authorList>
            <consortium name="US DOE Joint Genome Institute"/>
            <person name="Copeland A."/>
            <person name="Lucas S."/>
            <person name="Lapidus A."/>
            <person name="Glavina del Rio T."/>
            <person name="Dalin E."/>
            <person name="Tice H."/>
            <person name="Bruce D."/>
            <person name="Goodwin L."/>
            <person name="Pitluck S."/>
            <person name="Munk A.C."/>
            <person name="Brettin T."/>
            <person name="Detter J.C."/>
            <person name="Han C."/>
            <person name="Tapia R."/>
            <person name="Schmutz J."/>
            <person name="Larimer F."/>
            <person name="Land M."/>
            <person name="Hauser L."/>
            <person name="Challacombe J.F."/>
            <person name="Green L."/>
            <person name="Lindler L.E."/>
            <person name="Nikolich M.P."/>
            <person name="Richardson P."/>
        </authorList>
    </citation>
    <scope>NUCLEOTIDE SEQUENCE [LARGE SCALE GENOMIC DNA]</scope>
    <source>
        <strain>YPIII</strain>
    </source>
</reference>
<organism>
    <name type="scientific">Yersinia pseudotuberculosis serotype O:3 (strain YPIII)</name>
    <dbReference type="NCBI Taxonomy" id="502800"/>
    <lineage>
        <taxon>Bacteria</taxon>
        <taxon>Pseudomonadati</taxon>
        <taxon>Pseudomonadota</taxon>
        <taxon>Gammaproteobacteria</taxon>
        <taxon>Enterobacterales</taxon>
        <taxon>Yersiniaceae</taxon>
        <taxon>Yersinia</taxon>
    </lineage>
</organism>
<proteinExistence type="inferred from homology"/>
<accession>B1JM19</accession>
<feature type="chain" id="PRO_1000136135" description="Glycerol-3-phosphate acyltransferase">
    <location>
        <begin position="1"/>
        <end position="216"/>
    </location>
</feature>
<feature type="transmembrane region" description="Helical" evidence="1">
    <location>
        <begin position="4"/>
        <end position="24"/>
    </location>
</feature>
<feature type="transmembrane region" description="Helical" evidence="1">
    <location>
        <begin position="56"/>
        <end position="76"/>
    </location>
</feature>
<feature type="transmembrane region" description="Helical" evidence="1">
    <location>
        <begin position="80"/>
        <end position="100"/>
    </location>
</feature>
<feature type="transmembrane region" description="Helical" evidence="1">
    <location>
        <begin position="112"/>
        <end position="132"/>
    </location>
</feature>
<feature type="transmembrane region" description="Helical" evidence="1">
    <location>
        <begin position="138"/>
        <end position="158"/>
    </location>
</feature>
<name>PLSY_YERPY</name>